<organism>
    <name type="scientific">Streptococcus thermophilus (strain CNRZ 1066)</name>
    <dbReference type="NCBI Taxonomy" id="299768"/>
    <lineage>
        <taxon>Bacteria</taxon>
        <taxon>Bacillati</taxon>
        <taxon>Bacillota</taxon>
        <taxon>Bacilli</taxon>
        <taxon>Lactobacillales</taxon>
        <taxon>Streptococcaceae</taxon>
        <taxon>Streptococcus</taxon>
    </lineage>
</organism>
<feature type="chain" id="PRO_0000060475" description="tRNA (guanine-N(1)-)-methyltransferase">
    <location>
        <begin position="1"/>
        <end position="239"/>
    </location>
</feature>
<feature type="binding site" evidence="1">
    <location>
        <position position="108"/>
    </location>
    <ligand>
        <name>S-adenosyl-L-methionine</name>
        <dbReference type="ChEBI" id="CHEBI:59789"/>
    </ligand>
</feature>
<feature type="binding site" evidence="1">
    <location>
        <begin position="127"/>
        <end position="132"/>
    </location>
    <ligand>
        <name>S-adenosyl-L-methionine</name>
        <dbReference type="ChEBI" id="CHEBI:59789"/>
    </ligand>
</feature>
<accession>Q5LYY2</accession>
<name>TRMD_STRT1</name>
<protein>
    <recommendedName>
        <fullName evidence="1">tRNA (guanine-N(1)-)-methyltransferase</fullName>
        <ecNumber evidence="1">2.1.1.228</ecNumber>
    </recommendedName>
    <alternativeName>
        <fullName evidence="1">M1G-methyltransferase</fullName>
    </alternativeName>
    <alternativeName>
        <fullName evidence="1">tRNA [GM37] methyltransferase</fullName>
    </alternativeName>
</protein>
<proteinExistence type="inferred from homology"/>
<keyword id="KW-0963">Cytoplasm</keyword>
<keyword id="KW-0489">Methyltransferase</keyword>
<keyword id="KW-0949">S-adenosyl-L-methionine</keyword>
<keyword id="KW-0808">Transferase</keyword>
<keyword id="KW-0819">tRNA processing</keyword>
<reference key="1">
    <citation type="journal article" date="2004" name="Nat. Biotechnol.">
        <title>Complete sequence and comparative genome analysis of the dairy bacterium Streptococcus thermophilus.</title>
        <authorList>
            <person name="Bolotin A."/>
            <person name="Quinquis B."/>
            <person name="Renault P."/>
            <person name="Sorokin A."/>
            <person name="Ehrlich S.D."/>
            <person name="Kulakauskas S."/>
            <person name="Lapidus A."/>
            <person name="Goltsman E."/>
            <person name="Mazur M."/>
            <person name="Pusch G.D."/>
            <person name="Fonstein M."/>
            <person name="Overbeek R."/>
            <person name="Kyprides N."/>
            <person name="Purnelle B."/>
            <person name="Prozzi D."/>
            <person name="Ngui K."/>
            <person name="Masuy D."/>
            <person name="Hancy F."/>
            <person name="Burteau S."/>
            <person name="Boutry M."/>
            <person name="Delcour J."/>
            <person name="Goffeau A."/>
            <person name="Hols P."/>
        </authorList>
    </citation>
    <scope>NUCLEOTIDE SEQUENCE [LARGE SCALE GENOMIC DNA]</scope>
    <source>
        <strain>CNRZ 1066</strain>
    </source>
</reference>
<comment type="function">
    <text evidence="1">Specifically methylates guanosine-37 in various tRNAs.</text>
</comment>
<comment type="catalytic activity">
    <reaction evidence="1">
        <text>guanosine(37) in tRNA + S-adenosyl-L-methionine = N(1)-methylguanosine(37) in tRNA + S-adenosyl-L-homocysteine + H(+)</text>
        <dbReference type="Rhea" id="RHEA:36899"/>
        <dbReference type="Rhea" id="RHEA-COMP:10145"/>
        <dbReference type="Rhea" id="RHEA-COMP:10147"/>
        <dbReference type="ChEBI" id="CHEBI:15378"/>
        <dbReference type="ChEBI" id="CHEBI:57856"/>
        <dbReference type="ChEBI" id="CHEBI:59789"/>
        <dbReference type="ChEBI" id="CHEBI:73542"/>
        <dbReference type="ChEBI" id="CHEBI:74269"/>
        <dbReference type="EC" id="2.1.1.228"/>
    </reaction>
</comment>
<comment type="subunit">
    <text evidence="1">Homodimer.</text>
</comment>
<comment type="subcellular location">
    <subcellularLocation>
        <location evidence="1">Cytoplasm</location>
    </subcellularLocation>
</comment>
<comment type="similarity">
    <text evidence="1">Belongs to the RNA methyltransferase TrmD family.</text>
</comment>
<evidence type="ECO:0000255" key="1">
    <source>
        <dbReference type="HAMAP-Rule" id="MF_00605"/>
    </source>
</evidence>
<gene>
    <name evidence="1" type="primary">trmD</name>
    <name type="ordered locus">str1418</name>
</gene>
<dbReference type="EC" id="2.1.1.228" evidence="1"/>
<dbReference type="EMBL" id="CP000024">
    <property type="protein sequence ID" value="AAV62955.1"/>
    <property type="molecule type" value="Genomic_DNA"/>
</dbReference>
<dbReference type="RefSeq" id="WP_011227401.1">
    <property type="nucleotide sequence ID" value="NC_006449.1"/>
</dbReference>
<dbReference type="SMR" id="Q5LYY2"/>
<dbReference type="GeneID" id="66899178"/>
<dbReference type="KEGG" id="stc:str1418"/>
<dbReference type="HOGENOM" id="CLU_047363_0_1_9"/>
<dbReference type="GO" id="GO:0005829">
    <property type="term" value="C:cytosol"/>
    <property type="evidence" value="ECO:0007669"/>
    <property type="project" value="TreeGrafter"/>
</dbReference>
<dbReference type="GO" id="GO:0052906">
    <property type="term" value="F:tRNA (guanine(37)-N1)-methyltransferase activity"/>
    <property type="evidence" value="ECO:0007669"/>
    <property type="project" value="UniProtKB-UniRule"/>
</dbReference>
<dbReference type="GO" id="GO:0002939">
    <property type="term" value="P:tRNA N1-guanine methylation"/>
    <property type="evidence" value="ECO:0007669"/>
    <property type="project" value="TreeGrafter"/>
</dbReference>
<dbReference type="CDD" id="cd18080">
    <property type="entry name" value="TrmD-like"/>
    <property type="match status" value="1"/>
</dbReference>
<dbReference type="FunFam" id="1.10.1270.20:FF:000001">
    <property type="entry name" value="tRNA (guanine-N(1)-)-methyltransferase"/>
    <property type="match status" value="1"/>
</dbReference>
<dbReference type="FunFam" id="3.40.1280.10:FF:000001">
    <property type="entry name" value="tRNA (guanine-N(1)-)-methyltransferase"/>
    <property type="match status" value="1"/>
</dbReference>
<dbReference type="Gene3D" id="3.40.1280.10">
    <property type="match status" value="1"/>
</dbReference>
<dbReference type="Gene3D" id="1.10.1270.20">
    <property type="entry name" value="tRNA(m1g37)methyltransferase, domain 2"/>
    <property type="match status" value="1"/>
</dbReference>
<dbReference type="HAMAP" id="MF_00605">
    <property type="entry name" value="TrmD"/>
    <property type="match status" value="1"/>
</dbReference>
<dbReference type="InterPro" id="IPR029028">
    <property type="entry name" value="Alpha/beta_knot_MTases"/>
</dbReference>
<dbReference type="InterPro" id="IPR023148">
    <property type="entry name" value="tRNA_m1G_MeTrfase_C_sf"/>
</dbReference>
<dbReference type="InterPro" id="IPR002649">
    <property type="entry name" value="tRNA_m1G_MeTrfase_TrmD"/>
</dbReference>
<dbReference type="InterPro" id="IPR029026">
    <property type="entry name" value="tRNA_m1G_MTases_N"/>
</dbReference>
<dbReference type="InterPro" id="IPR016009">
    <property type="entry name" value="tRNA_MeTrfase_TRMD/TRM10"/>
</dbReference>
<dbReference type="NCBIfam" id="NF000648">
    <property type="entry name" value="PRK00026.1"/>
    <property type="match status" value="1"/>
</dbReference>
<dbReference type="NCBIfam" id="TIGR00088">
    <property type="entry name" value="trmD"/>
    <property type="match status" value="1"/>
</dbReference>
<dbReference type="PANTHER" id="PTHR46417">
    <property type="entry name" value="TRNA (GUANINE-N(1)-)-METHYLTRANSFERASE"/>
    <property type="match status" value="1"/>
</dbReference>
<dbReference type="PANTHER" id="PTHR46417:SF1">
    <property type="entry name" value="TRNA (GUANINE-N(1)-)-METHYLTRANSFERASE"/>
    <property type="match status" value="1"/>
</dbReference>
<dbReference type="Pfam" id="PF01746">
    <property type="entry name" value="tRNA_m1G_MT"/>
    <property type="match status" value="1"/>
</dbReference>
<dbReference type="PIRSF" id="PIRSF000386">
    <property type="entry name" value="tRNA_mtase"/>
    <property type="match status" value="1"/>
</dbReference>
<dbReference type="SUPFAM" id="SSF75217">
    <property type="entry name" value="alpha/beta knot"/>
    <property type="match status" value="1"/>
</dbReference>
<sequence>MKIDILTLFPDMFAPLEYSIVGKAKDKGILEINYHNFRDNAEKARHVDDEPYGGGQGMLLRAQPIFDTFDKLNVTKPRVILLDPAGRTFNQAYAEELAQEEELVFICGHYEGYDERTKTLVTDEISLGDFVLTGGELAAMTIVDATVRLIPEVLGKEASHKDDSFSSGLLEFPQYTRPAEFRGMKVPDVLLSGHHVNIRRWRMEQSLRKTWERRPDLLENYDFTDEERQILEEIKSEGK</sequence>